<accession>P0AB20</accession>
<accession>P75875</accession>
<name>HSPQ_ECOLI</name>
<evidence type="ECO:0000256" key="1">
    <source>
        <dbReference type="SAM" id="MobiDB-lite"/>
    </source>
</evidence>
<evidence type="ECO:0000269" key="2">
    <source>
    </source>
</evidence>
<evidence type="ECO:0000305" key="3"/>
<evidence type="ECO:0007829" key="4">
    <source>
        <dbReference type="PDB" id="5YCQ"/>
    </source>
</evidence>
<gene>
    <name type="primary">hspQ</name>
    <name type="synonym">yccV</name>
    <name type="ordered locus">b0966</name>
    <name type="ordered locus">JW5970</name>
</gene>
<protein>
    <recommendedName>
        <fullName>Heat shock protein HspQ</fullName>
    </recommendedName>
</protein>
<sequence>MIASKFGIGQQVRHSLLGYLGVVVDIDPVYSLSEPSPDELAVNDELRAAPWYHVVMEDDNGLPVHTYLAEAQLSSELQDEHPEQPSMDELAQTIRKQLQAPRLRN</sequence>
<reference key="1">
    <citation type="journal article" date="1996" name="DNA Res.">
        <title>A 718-kb DNA sequence of the Escherichia coli K-12 genome corresponding to the 12.7-28.0 min region on the linkage map.</title>
        <authorList>
            <person name="Oshima T."/>
            <person name="Aiba H."/>
            <person name="Baba T."/>
            <person name="Fujita K."/>
            <person name="Hayashi K."/>
            <person name="Honjo A."/>
            <person name="Ikemoto K."/>
            <person name="Inada T."/>
            <person name="Itoh T."/>
            <person name="Kajihara M."/>
            <person name="Kanai K."/>
            <person name="Kashimoto K."/>
            <person name="Kimura S."/>
            <person name="Kitagawa M."/>
            <person name="Makino K."/>
            <person name="Masuda S."/>
            <person name="Miki T."/>
            <person name="Mizobuchi K."/>
            <person name="Mori H."/>
            <person name="Motomura K."/>
            <person name="Nakamura Y."/>
            <person name="Nashimoto H."/>
            <person name="Nishio Y."/>
            <person name="Saito N."/>
            <person name="Sampei G."/>
            <person name="Seki Y."/>
            <person name="Tagami H."/>
            <person name="Takemoto K."/>
            <person name="Wada C."/>
            <person name="Yamamoto Y."/>
            <person name="Yano M."/>
            <person name="Horiuchi T."/>
        </authorList>
    </citation>
    <scope>NUCLEOTIDE SEQUENCE [LARGE SCALE GENOMIC DNA]</scope>
    <source>
        <strain>K12 / W3110 / ATCC 27325 / DSM 5911</strain>
    </source>
</reference>
<reference key="2">
    <citation type="journal article" date="1997" name="Science">
        <title>The complete genome sequence of Escherichia coli K-12.</title>
        <authorList>
            <person name="Blattner F.R."/>
            <person name="Plunkett G. III"/>
            <person name="Bloch C.A."/>
            <person name="Perna N.T."/>
            <person name="Burland V."/>
            <person name="Riley M."/>
            <person name="Collado-Vides J."/>
            <person name="Glasner J.D."/>
            <person name="Rode C.K."/>
            <person name="Mayhew G.F."/>
            <person name="Gregor J."/>
            <person name="Davis N.W."/>
            <person name="Kirkpatrick H.A."/>
            <person name="Goeden M.A."/>
            <person name="Rose D.J."/>
            <person name="Mau B."/>
            <person name="Shao Y."/>
        </authorList>
    </citation>
    <scope>NUCLEOTIDE SEQUENCE [LARGE SCALE GENOMIC DNA]</scope>
    <source>
        <strain>K12 / MG1655 / ATCC 47076</strain>
    </source>
</reference>
<reference key="3">
    <citation type="journal article" date="2006" name="Mol. Syst. Biol.">
        <title>Highly accurate genome sequences of Escherichia coli K-12 strains MG1655 and W3110.</title>
        <authorList>
            <person name="Hayashi K."/>
            <person name="Morooka N."/>
            <person name="Yamamoto Y."/>
            <person name="Fujita K."/>
            <person name="Isono K."/>
            <person name="Choi S."/>
            <person name="Ohtsubo E."/>
            <person name="Baba T."/>
            <person name="Wanner B.L."/>
            <person name="Mori H."/>
            <person name="Horiuchi T."/>
        </authorList>
    </citation>
    <scope>NUCLEOTIDE SEQUENCE [LARGE SCALE GENOMIC DNA]</scope>
    <source>
        <strain>K12 / W3110 / ATCC 27325 / DSM 5911</strain>
    </source>
</reference>
<reference key="4">
    <citation type="journal article" date="2004" name="Genes Cells">
        <title>Novel heat shock protein HspQ stimulates the degradation of mutant DnaA protein in Escherichia coli.</title>
        <authorList>
            <person name="Shimuta T.R."/>
            <person name="Nakano K."/>
            <person name="Yamaguchi Y."/>
            <person name="Ozaki S."/>
            <person name="Fujimitsu K."/>
            <person name="Matsunaga C."/>
            <person name="Noguchi K."/>
            <person name="Emoto A."/>
            <person name="Katayama T."/>
        </authorList>
    </citation>
    <scope>PROTEIN SEQUENCE OF 1-6</scope>
    <scope>CHARACTERIZATION</scope>
    <scope>INDUCTION</scope>
</reference>
<reference key="5">
    <citation type="submission" date="2004-03" db="PDB data bank">
        <title>Crystal structure of hypothetical protein from Escherichia coli.</title>
        <authorList>
            <person name="Shioi S."/>
            <person name="Maenaka K."/>
            <person name="Kohda D."/>
            <person name="Katayama T."/>
            <person name="Ueda T."/>
        </authorList>
    </citation>
    <scope>X-RAY CRYSTALLOGRAPHY (2.7 ANGSTROMS)</scope>
</reference>
<keyword id="KW-0002">3D-structure</keyword>
<keyword id="KW-0963">Cytoplasm</keyword>
<keyword id="KW-0903">Direct protein sequencing</keyword>
<keyword id="KW-1185">Reference proteome</keyword>
<keyword id="KW-0346">Stress response</keyword>
<proteinExistence type="evidence at protein level"/>
<organism>
    <name type="scientific">Escherichia coli (strain K12)</name>
    <dbReference type="NCBI Taxonomy" id="83333"/>
    <lineage>
        <taxon>Bacteria</taxon>
        <taxon>Pseudomonadati</taxon>
        <taxon>Pseudomonadota</taxon>
        <taxon>Gammaproteobacteria</taxon>
        <taxon>Enterobacterales</taxon>
        <taxon>Enterobacteriaceae</taxon>
        <taxon>Escherichia</taxon>
    </lineage>
</organism>
<feature type="chain" id="PRO_0000168795" description="Heat shock protein HspQ">
    <location>
        <begin position="1"/>
        <end position="105"/>
    </location>
</feature>
<feature type="region of interest" description="Disordered" evidence="1">
    <location>
        <begin position="75"/>
        <end position="105"/>
    </location>
</feature>
<feature type="strand" evidence="4">
    <location>
        <begin position="11"/>
        <end position="14"/>
    </location>
</feature>
<feature type="turn" evidence="4">
    <location>
        <begin position="15"/>
        <end position="17"/>
    </location>
</feature>
<feature type="strand" evidence="4">
    <location>
        <begin position="20"/>
        <end position="27"/>
    </location>
</feature>
<feature type="strand" evidence="4">
    <location>
        <begin position="51"/>
        <end position="57"/>
    </location>
</feature>
<feature type="strand" evidence="4">
    <location>
        <begin position="63"/>
        <end position="69"/>
    </location>
</feature>
<feature type="helix" evidence="4">
    <location>
        <begin position="70"/>
        <end position="72"/>
    </location>
</feature>
<feature type="strand" evidence="4">
    <location>
        <begin position="73"/>
        <end position="75"/>
    </location>
</feature>
<feature type="helix" evidence="4">
    <location>
        <begin position="85"/>
        <end position="94"/>
    </location>
</feature>
<dbReference type="EMBL" id="U00096">
    <property type="protein sequence ID" value="AAC74052.2"/>
    <property type="molecule type" value="Genomic_DNA"/>
</dbReference>
<dbReference type="EMBL" id="AP009048">
    <property type="protein sequence ID" value="BAA35731.2"/>
    <property type="molecule type" value="Genomic_DNA"/>
</dbReference>
<dbReference type="PIR" id="E64837">
    <property type="entry name" value="E64837"/>
</dbReference>
<dbReference type="RefSeq" id="NP_415486.4">
    <property type="nucleotide sequence ID" value="NC_000913.3"/>
</dbReference>
<dbReference type="RefSeq" id="WP_001295356.1">
    <property type="nucleotide sequence ID" value="NZ_STEB01000006.1"/>
</dbReference>
<dbReference type="PDB" id="5YCQ">
    <property type="method" value="X-ray"/>
    <property type="resolution" value="2.50 A"/>
    <property type="chains" value="A=1-105"/>
</dbReference>
<dbReference type="PDBsum" id="5YCQ"/>
<dbReference type="SMR" id="P0AB20"/>
<dbReference type="BioGRID" id="4262986">
    <property type="interactions" value="8"/>
</dbReference>
<dbReference type="DIP" id="DIP-48155N"/>
<dbReference type="FunCoup" id="P0AB20">
    <property type="interactions" value="17"/>
</dbReference>
<dbReference type="STRING" id="511145.b0966"/>
<dbReference type="jPOST" id="P0AB20"/>
<dbReference type="PaxDb" id="511145-b0966"/>
<dbReference type="EnsemblBacteria" id="AAC74052">
    <property type="protein sequence ID" value="AAC74052"/>
    <property type="gene ID" value="b0966"/>
</dbReference>
<dbReference type="GeneID" id="93776448"/>
<dbReference type="GeneID" id="945578"/>
<dbReference type="KEGG" id="ecj:JW5970"/>
<dbReference type="KEGG" id="eco:b0966"/>
<dbReference type="KEGG" id="ecoc:C3026_05905"/>
<dbReference type="PATRIC" id="fig|1411691.4.peg.1307"/>
<dbReference type="EchoBASE" id="EB3488"/>
<dbReference type="eggNOG" id="COG3785">
    <property type="taxonomic scope" value="Bacteria"/>
</dbReference>
<dbReference type="InParanoid" id="P0AB20"/>
<dbReference type="OMA" id="LRTAPWY"/>
<dbReference type="OrthoDB" id="9806050at2"/>
<dbReference type="PhylomeDB" id="P0AB20"/>
<dbReference type="BioCyc" id="EcoCyc:G6500-MONOMER"/>
<dbReference type="PRO" id="PR:P0AB20"/>
<dbReference type="Proteomes" id="UP000000625">
    <property type="component" value="Chromosome"/>
</dbReference>
<dbReference type="GO" id="GO:0005737">
    <property type="term" value="C:cytoplasm"/>
    <property type="evidence" value="ECO:0007669"/>
    <property type="project" value="UniProtKB-SubCell"/>
</dbReference>
<dbReference type="GO" id="GO:0044729">
    <property type="term" value="F:hemi-methylated DNA-binding"/>
    <property type="evidence" value="ECO:0000314"/>
    <property type="project" value="EcoCyc"/>
</dbReference>
<dbReference type="GO" id="GO:0042802">
    <property type="term" value="F:identical protein binding"/>
    <property type="evidence" value="ECO:0000314"/>
    <property type="project" value="EcoCyc"/>
</dbReference>
<dbReference type="GO" id="GO:0070207">
    <property type="term" value="P:protein homotrimerization"/>
    <property type="evidence" value="ECO:0000314"/>
    <property type="project" value="EcoCyc"/>
</dbReference>
<dbReference type="GO" id="GO:0009408">
    <property type="term" value="P:response to heat"/>
    <property type="evidence" value="ECO:0007669"/>
    <property type="project" value="UniProtKB-UniRule"/>
</dbReference>
<dbReference type="Gene3D" id="2.30.30.390">
    <property type="entry name" value="Hemimethylated DNA-binding domain"/>
    <property type="match status" value="1"/>
</dbReference>
<dbReference type="HAMAP" id="MF_01194">
    <property type="entry name" value="HspQ"/>
    <property type="match status" value="1"/>
</dbReference>
<dbReference type="InterPro" id="IPR011722">
    <property type="entry name" value="Hemimethylated_DNA-bd_dom"/>
</dbReference>
<dbReference type="InterPro" id="IPR036623">
    <property type="entry name" value="Hemimethylated_DNA-bd_sf"/>
</dbReference>
<dbReference type="InterPro" id="IPR022866">
    <property type="entry name" value="HspQ"/>
</dbReference>
<dbReference type="NCBIfam" id="NF010729">
    <property type="entry name" value="PRK14129.1"/>
    <property type="match status" value="1"/>
</dbReference>
<dbReference type="NCBIfam" id="TIGR02097">
    <property type="entry name" value="yccV"/>
    <property type="match status" value="1"/>
</dbReference>
<dbReference type="Pfam" id="PF08755">
    <property type="entry name" value="YccV-like"/>
    <property type="match status" value="1"/>
</dbReference>
<dbReference type="SMART" id="SM00992">
    <property type="entry name" value="YccV-like"/>
    <property type="match status" value="1"/>
</dbReference>
<dbReference type="SUPFAM" id="SSF141255">
    <property type="entry name" value="YccV-like"/>
    <property type="match status" value="1"/>
</dbReference>
<comment type="function">
    <text>Involved in the degradation of certain denaturated proteins, including DnaA, during heat shock stress.</text>
</comment>
<comment type="subcellular location">
    <subcellularLocation>
        <location evidence="3">Cytoplasm</location>
    </subcellularLocation>
</comment>
<comment type="induction">
    <text evidence="2">By heat shock. Transcribed by the sigma-32 subunit of RNA polymerase.</text>
</comment>
<comment type="similarity">
    <text evidence="3">Belongs to the HspQ family.</text>
</comment>